<gene>
    <name type="primary">PSAE</name>
</gene>
<dbReference type="PIR" id="S00316">
    <property type="entry name" value="S00316"/>
</dbReference>
<dbReference type="GO" id="GO:0009535">
    <property type="term" value="C:chloroplast thylakoid membrane"/>
    <property type="evidence" value="ECO:0007669"/>
    <property type="project" value="UniProtKB-SubCell"/>
</dbReference>
<dbReference type="GO" id="GO:0009522">
    <property type="term" value="C:photosystem I"/>
    <property type="evidence" value="ECO:0007669"/>
    <property type="project" value="UniProtKB-KW"/>
</dbReference>
<dbReference type="GO" id="GO:0015979">
    <property type="term" value="P:photosynthesis"/>
    <property type="evidence" value="ECO:0007669"/>
    <property type="project" value="UniProtKB-KW"/>
</dbReference>
<reference key="1">
    <citation type="journal article" date="1988" name="FEBS Lett.">
        <title>N-terminal amino acid sequence analysis of the subunits of pea photosystem I.</title>
        <authorList>
            <person name="Dunn P.P.J."/>
            <person name="Packman L.C."/>
            <person name="Pappin D."/>
            <person name="Gray J.C."/>
        </authorList>
    </citation>
    <scope>PROTEIN SEQUENCE</scope>
</reference>
<evidence type="ECO:0000250" key="1"/>
<evidence type="ECO:0000305" key="2"/>
<feature type="chain" id="PRO_0000204392" description="Photosystem I reaction center subunit IV">
    <location>
        <begin position="1"/>
        <end position="13" status="greater than"/>
    </location>
</feature>
<feature type="non-terminal residue">
    <location>
        <position position="13"/>
    </location>
</feature>
<name>PSAE_PEA</name>
<sequence>ASEDTAEAAAPSA</sequence>
<comment type="function">
    <text evidence="1">Stabilizes the interaction between PsaC and the PSI core, assists the docking of the ferredoxin to PSI and interacts with ferredoxin-NADP oxidoreductase.</text>
</comment>
<comment type="subcellular location">
    <subcellularLocation>
        <location>Plastid</location>
        <location>Chloroplast thylakoid membrane</location>
        <topology>Peripheral membrane protein</topology>
    </subcellularLocation>
</comment>
<comment type="similarity">
    <text evidence="2">Belongs to the PsaE family.</text>
</comment>
<proteinExistence type="evidence at protein level"/>
<accession>P20118</accession>
<keyword id="KW-0150">Chloroplast</keyword>
<keyword id="KW-0903">Direct protein sequencing</keyword>
<keyword id="KW-0472">Membrane</keyword>
<keyword id="KW-0602">Photosynthesis</keyword>
<keyword id="KW-0603">Photosystem I</keyword>
<keyword id="KW-0934">Plastid</keyword>
<keyword id="KW-0793">Thylakoid</keyword>
<protein>
    <recommendedName>
        <fullName>Photosystem I reaction center subunit IV</fullName>
        <shortName>PSI-E</shortName>
    </recommendedName>
    <alternativeName>
        <fullName>Photosystem I 13 kDa protein</fullName>
    </alternativeName>
</protein>
<organism>
    <name type="scientific">Pisum sativum</name>
    <name type="common">Garden pea</name>
    <name type="synonym">Lathyrus oleraceus</name>
    <dbReference type="NCBI Taxonomy" id="3888"/>
    <lineage>
        <taxon>Eukaryota</taxon>
        <taxon>Viridiplantae</taxon>
        <taxon>Streptophyta</taxon>
        <taxon>Embryophyta</taxon>
        <taxon>Tracheophyta</taxon>
        <taxon>Spermatophyta</taxon>
        <taxon>Magnoliopsida</taxon>
        <taxon>eudicotyledons</taxon>
        <taxon>Gunneridae</taxon>
        <taxon>Pentapetalae</taxon>
        <taxon>rosids</taxon>
        <taxon>fabids</taxon>
        <taxon>Fabales</taxon>
        <taxon>Fabaceae</taxon>
        <taxon>Papilionoideae</taxon>
        <taxon>50 kb inversion clade</taxon>
        <taxon>NPAAA clade</taxon>
        <taxon>Hologalegina</taxon>
        <taxon>IRL clade</taxon>
        <taxon>Fabeae</taxon>
        <taxon>Pisum</taxon>
    </lineage>
</organism>